<name>RS10_MYCSJ</name>
<sequence length="101" mass="11433">MAGQKIRIRLKAYDHEAIDASARKIVETVTRTGASVVGPVPLPTEKNVYCVIRSPHKYKDSREHFEMRTHKRLIDILDPTPKTVDALMRIDLPASVDVNIQ</sequence>
<organism>
    <name type="scientific">Mycobacterium sp. (strain JLS)</name>
    <dbReference type="NCBI Taxonomy" id="164757"/>
    <lineage>
        <taxon>Bacteria</taxon>
        <taxon>Bacillati</taxon>
        <taxon>Actinomycetota</taxon>
        <taxon>Actinomycetes</taxon>
        <taxon>Mycobacteriales</taxon>
        <taxon>Mycobacteriaceae</taxon>
        <taxon>Mycobacterium</taxon>
    </lineage>
</organism>
<feature type="chain" id="PRO_1000015061" description="Small ribosomal subunit protein uS10">
    <location>
        <begin position="1"/>
        <end position="101"/>
    </location>
</feature>
<reference key="1">
    <citation type="submission" date="2007-02" db="EMBL/GenBank/DDBJ databases">
        <title>Complete sequence of Mycobacterium sp. JLS.</title>
        <authorList>
            <consortium name="US DOE Joint Genome Institute"/>
            <person name="Copeland A."/>
            <person name="Lucas S."/>
            <person name="Lapidus A."/>
            <person name="Barry K."/>
            <person name="Detter J.C."/>
            <person name="Glavina del Rio T."/>
            <person name="Hammon N."/>
            <person name="Israni S."/>
            <person name="Dalin E."/>
            <person name="Tice H."/>
            <person name="Pitluck S."/>
            <person name="Chain P."/>
            <person name="Malfatti S."/>
            <person name="Shin M."/>
            <person name="Vergez L."/>
            <person name="Schmutz J."/>
            <person name="Larimer F."/>
            <person name="Land M."/>
            <person name="Hauser L."/>
            <person name="Kyrpides N."/>
            <person name="Mikhailova N."/>
            <person name="Miller C.D."/>
            <person name="Anderson A.J."/>
            <person name="Sims R.C."/>
            <person name="Richardson P."/>
        </authorList>
    </citation>
    <scope>NUCLEOTIDE SEQUENCE [LARGE SCALE GENOMIC DNA]</scope>
    <source>
        <strain>JLS</strain>
    </source>
</reference>
<proteinExistence type="inferred from homology"/>
<gene>
    <name evidence="1" type="primary">rpsJ</name>
    <name type="ordered locus">Mjls_1039</name>
</gene>
<protein>
    <recommendedName>
        <fullName evidence="1">Small ribosomal subunit protein uS10</fullName>
    </recommendedName>
    <alternativeName>
        <fullName evidence="2">30S ribosomal protein S10</fullName>
    </alternativeName>
</protein>
<accession>A3PVC0</accession>
<keyword id="KW-0687">Ribonucleoprotein</keyword>
<keyword id="KW-0689">Ribosomal protein</keyword>
<comment type="function">
    <text evidence="1">Involved in the binding of tRNA to the ribosomes.</text>
</comment>
<comment type="subunit">
    <text evidence="1">Part of the 30S ribosomal subunit.</text>
</comment>
<comment type="similarity">
    <text evidence="1">Belongs to the universal ribosomal protein uS10 family.</text>
</comment>
<evidence type="ECO:0000255" key="1">
    <source>
        <dbReference type="HAMAP-Rule" id="MF_00508"/>
    </source>
</evidence>
<evidence type="ECO:0000305" key="2"/>
<dbReference type="EMBL" id="CP000580">
    <property type="protein sequence ID" value="ABN96847.1"/>
    <property type="molecule type" value="Genomic_DNA"/>
</dbReference>
<dbReference type="SMR" id="A3PVC0"/>
<dbReference type="KEGG" id="mjl:Mjls_1039"/>
<dbReference type="HOGENOM" id="CLU_122625_1_3_11"/>
<dbReference type="BioCyc" id="MSP164757:G1G8C-1052-MONOMER"/>
<dbReference type="GO" id="GO:1990904">
    <property type="term" value="C:ribonucleoprotein complex"/>
    <property type="evidence" value="ECO:0007669"/>
    <property type="project" value="UniProtKB-KW"/>
</dbReference>
<dbReference type="GO" id="GO:0005840">
    <property type="term" value="C:ribosome"/>
    <property type="evidence" value="ECO:0007669"/>
    <property type="project" value="UniProtKB-KW"/>
</dbReference>
<dbReference type="GO" id="GO:0003735">
    <property type="term" value="F:structural constituent of ribosome"/>
    <property type="evidence" value="ECO:0007669"/>
    <property type="project" value="InterPro"/>
</dbReference>
<dbReference type="GO" id="GO:0000049">
    <property type="term" value="F:tRNA binding"/>
    <property type="evidence" value="ECO:0007669"/>
    <property type="project" value="UniProtKB-UniRule"/>
</dbReference>
<dbReference type="GO" id="GO:0006412">
    <property type="term" value="P:translation"/>
    <property type="evidence" value="ECO:0007669"/>
    <property type="project" value="UniProtKB-UniRule"/>
</dbReference>
<dbReference type="FunFam" id="3.30.70.600:FF:000001">
    <property type="entry name" value="30S ribosomal protein S10"/>
    <property type="match status" value="1"/>
</dbReference>
<dbReference type="Gene3D" id="3.30.70.600">
    <property type="entry name" value="Ribosomal protein S10 domain"/>
    <property type="match status" value="1"/>
</dbReference>
<dbReference type="HAMAP" id="MF_00508">
    <property type="entry name" value="Ribosomal_uS10"/>
    <property type="match status" value="1"/>
</dbReference>
<dbReference type="InterPro" id="IPR001848">
    <property type="entry name" value="Ribosomal_uS10"/>
</dbReference>
<dbReference type="InterPro" id="IPR018268">
    <property type="entry name" value="Ribosomal_uS10_CS"/>
</dbReference>
<dbReference type="InterPro" id="IPR027486">
    <property type="entry name" value="Ribosomal_uS10_dom"/>
</dbReference>
<dbReference type="InterPro" id="IPR036838">
    <property type="entry name" value="Ribosomal_uS10_dom_sf"/>
</dbReference>
<dbReference type="NCBIfam" id="NF001861">
    <property type="entry name" value="PRK00596.1"/>
    <property type="match status" value="1"/>
</dbReference>
<dbReference type="NCBIfam" id="TIGR01049">
    <property type="entry name" value="rpsJ_bact"/>
    <property type="match status" value="1"/>
</dbReference>
<dbReference type="PANTHER" id="PTHR11700">
    <property type="entry name" value="30S RIBOSOMAL PROTEIN S10 FAMILY MEMBER"/>
    <property type="match status" value="1"/>
</dbReference>
<dbReference type="Pfam" id="PF00338">
    <property type="entry name" value="Ribosomal_S10"/>
    <property type="match status" value="1"/>
</dbReference>
<dbReference type="PRINTS" id="PR00971">
    <property type="entry name" value="RIBOSOMALS10"/>
</dbReference>
<dbReference type="SMART" id="SM01403">
    <property type="entry name" value="Ribosomal_S10"/>
    <property type="match status" value="1"/>
</dbReference>
<dbReference type="SUPFAM" id="SSF54999">
    <property type="entry name" value="Ribosomal protein S10"/>
    <property type="match status" value="1"/>
</dbReference>
<dbReference type="PROSITE" id="PS00361">
    <property type="entry name" value="RIBOSOMAL_S10"/>
    <property type="match status" value="1"/>
</dbReference>